<proteinExistence type="evidence at protein level"/>
<sequence>MAGAAGPGSGPGAAGGDGDDSLYPIAVLIDELRNEDVQLRLNSIKKLSTIALALGVERTRTELLPFLTDTIYDEDEVLLALAEQLGNFTGLVGGPDFAHCLLPPLESLATVEETVVRDKAVESLRQISQEHTPVALEAHFVPLVKRLASGDWFTSRTSACGLFSVCYPRASNAVKAEIRQHFRSLCSDDTPMVRRAAASKLGEFAKVLELDSVKTEIVPLFTNLASDEQDSVRLLAVEACVSIAQLLSQEDLEALVMPTLRQAAEDKSWRVRYMVADKFSELQKAVGPKIALSDLIPAFQSLLRDCEAEVRAAAAHKVRELCENLPAEGRETVIMNQILPYIKELVSDTNQHVKSALASVIMGLSTVLGKENTIEHLLPLFLAQLKDECPEVRLNIISNLDCVNEVIGIRQLSQSLLPAIVELAEDAKWRVRLAIIEYMPLLAGQLGVEFFDEKLNSLCMAWLVDHVYAIREAATNNLMKLVQKFGTEWAQNTIVPKVLVMANDPNYLHRMTTLFCINALSEACGKEITTKQMLPIVLKMAGDQVANVRFNVAKSLQKIGPILDTNALQGEVKPVLQKLGQDEDMDVKYFAQEAISVLALA</sequence>
<accession>Q7TNP2</accession>
<accession>E9QNJ1</accession>
<dbReference type="EMBL" id="AC103406">
    <property type="status" value="NOT_ANNOTATED_CDS"/>
    <property type="molecule type" value="Genomic_DNA"/>
</dbReference>
<dbReference type="EMBL" id="AC123614">
    <property type="status" value="NOT_ANNOTATED_CDS"/>
    <property type="molecule type" value="Genomic_DNA"/>
</dbReference>
<dbReference type="EMBL" id="BC056218">
    <property type="protein sequence ID" value="AAH56218.1"/>
    <property type="molecule type" value="mRNA"/>
</dbReference>
<dbReference type="CCDS" id="CCDS40626.1"/>
<dbReference type="RefSeq" id="NP_082890.2">
    <property type="nucleotide sequence ID" value="NM_028614.3"/>
</dbReference>
<dbReference type="SMR" id="Q7TNP2"/>
<dbReference type="BioGRID" id="216197">
    <property type="interactions" value="3"/>
</dbReference>
<dbReference type="FunCoup" id="Q7TNP2">
    <property type="interactions" value="1706"/>
</dbReference>
<dbReference type="IntAct" id="Q7TNP2">
    <property type="interactions" value="1"/>
</dbReference>
<dbReference type="STRING" id="10090.ENSMUSP00000133404"/>
<dbReference type="iPTMnet" id="Q7TNP2"/>
<dbReference type="PhosphoSitePlus" id="Q7TNP2"/>
<dbReference type="SwissPalm" id="Q7TNP2"/>
<dbReference type="jPOST" id="Q7TNP2"/>
<dbReference type="PaxDb" id="10090-ENSMUSP00000034560"/>
<dbReference type="ProteomicsDB" id="285890"/>
<dbReference type="Pumba" id="Q7TNP2"/>
<dbReference type="Antibodypedia" id="3416">
    <property type="antibodies" value="302 antibodies from 36 providers"/>
</dbReference>
<dbReference type="DNASU" id="73699"/>
<dbReference type="Ensembl" id="ENSMUST00000114437.9">
    <property type="protein sequence ID" value="ENSMUSP00000110080.3"/>
    <property type="gene ID" value="ENSMUSG00000032058.15"/>
</dbReference>
<dbReference type="GeneID" id="73699"/>
<dbReference type="KEGG" id="mmu:73699"/>
<dbReference type="UCSC" id="uc009pkv.2">
    <property type="organism name" value="mouse"/>
</dbReference>
<dbReference type="AGR" id="MGI:1920949"/>
<dbReference type="CTD" id="5519"/>
<dbReference type="MGI" id="MGI:1920949">
    <property type="gene designation" value="Ppp2r1b"/>
</dbReference>
<dbReference type="VEuPathDB" id="HostDB:ENSMUSG00000032058"/>
<dbReference type="eggNOG" id="KOG0211">
    <property type="taxonomic scope" value="Eukaryota"/>
</dbReference>
<dbReference type="GeneTree" id="ENSGT00950000183066"/>
<dbReference type="InParanoid" id="Q7TNP2"/>
<dbReference type="OrthoDB" id="340346at2759"/>
<dbReference type="Reactome" id="R-MMU-113501">
    <property type="pathway name" value="Inhibition of replication initiation of damaged DNA by RB1/E2F1"/>
</dbReference>
<dbReference type="Reactome" id="R-MMU-141444">
    <property type="pathway name" value="Amplification of signal from unattached kinetochores via a MAD2 inhibitory signal"/>
</dbReference>
<dbReference type="Reactome" id="R-MMU-180024">
    <property type="pathway name" value="DARPP-32 events"/>
</dbReference>
<dbReference type="Reactome" id="R-MMU-195253">
    <property type="pathway name" value="Degradation of beta-catenin by the destruction complex"/>
</dbReference>
<dbReference type="Reactome" id="R-MMU-196299">
    <property type="pathway name" value="Beta-catenin phosphorylation cascade"/>
</dbReference>
<dbReference type="Reactome" id="R-MMU-198753">
    <property type="pathway name" value="ERK/MAPK targets"/>
</dbReference>
<dbReference type="Reactome" id="R-MMU-202670">
    <property type="pathway name" value="ERKs are inactivated"/>
</dbReference>
<dbReference type="Reactome" id="R-MMU-2467813">
    <property type="pathway name" value="Separation of Sister Chromatids"/>
</dbReference>
<dbReference type="Reactome" id="R-MMU-2500257">
    <property type="pathway name" value="Resolution of Sister Chromatid Cohesion"/>
</dbReference>
<dbReference type="Reactome" id="R-MMU-389356">
    <property type="pathway name" value="Co-stimulation by CD28"/>
</dbReference>
<dbReference type="Reactome" id="R-MMU-389513">
    <property type="pathway name" value="Co-inhibition by CTLA4"/>
</dbReference>
<dbReference type="Reactome" id="R-MMU-432142">
    <property type="pathway name" value="Platelet sensitization by LDL"/>
</dbReference>
<dbReference type="Reactome" id="R-MMU-4641262">
    <property type="pathway name" value="Disassembly of the destruction complex and recruitment of AXIN to the membrane"/>
</dbReference>
<dbReference type="Reactome" id="R-MMU-5663220">
    <property type="pathway name" value="RHO GTPases Activate Formins"/>
</dbReference>
<dbReference type="Reactome" id="R-MMU-5673000">
    <property type="pathway name" value="RAF activation"/>
</dbReference>
<dbReference type="Reactome" id="R-MMU-5675221">
    <property type="pathway name" value="Negative regulation of MAPK pathway"/>
</dbReference>
<dbReference type="Reactome" id="R-MMU-6804757">
    <property type="pathway name" value="Regulation of TP53 Degradation"/>
</dbReference>
<dbReference type="Reactome" id="R-MMU-6811558">
    <property type="pathway name" value="PI5P, PP2A and IER3 Regulate PI3K/AKT Signaling"/>
</dbReference>
<dbReference type="Reactome" id="R-MMU-68877">
    <property type="pathway name" value="Mitotic Prometaphase"/>
</dbReference>
<dbReference type="Reactome" id="R-MMU-69231">
    <property type="pathway name" value="Cyclin D associated events in G1"/>
</dbReference>
<dbReference type="Reactome" id="R-MMU-69273">
    <property type="pathway name" value="Cyclin A/B1/B2 associated events during G2/M transition"/>
</dbReference>
<dbReference type="Reactome" id="R-MMU-9648025">
    <property type="pathway name" value="EML4 and NUDC in mitotic spindle formation"/>
</dbReference>
<dbReference type="Reactome" id="R-MMU-9833482">
    <property type="pathway name" value="PKR-mediated signaling"/>
</dbReference>
<dbReference type="Reactome" id="R-MMU-9860927">
    <property type="pathway name" value="Turbulent (oscillatory, disturbed) flow shear stress activates signaling by PIEZO1 and integrins in endothelial cells"/>
</dbReference>
<dbReference type="BioGRID-ORCS" id="73699">
    <property type="hits" value="3 hits in 78 CRISPR screens"/>
</dbReference>
<dbReference type="ChiTaRS" id="Ppp2r1b">
    <property type="organism name" value="mouse"/>
</dbReference>
<dbReference type="PRO" id="PR:Q7TNP2"/>
<dbReference type="Proteomes" id="UP000000589">
    <property type="component" value="Chromosome 9"/>
</dbReference>
<dbReference type="RNAct" id="Q7TNP2">
    <property type="molecule type" value="protein"/>
</dbReference>
<dbReference type="Bgee" id="ENSMUSG00000032058">
    <property type="expression patterns" value="Expressed in metanephric ureteric bud and 256 other cell types or tissues"/>
</dbReference>
<dbReference type="ExpressionAtlas" id="Q7TNP2">
    <property type="expression patterns" value="baseline and differential"/>
</dbReference>
<dbReference type="GO" id="GO:0098978">
    <property type="term" value="C:glutamatergic synapse"/>
    <property type="evidence" value="ECO:0000314"/>
    <property type="project" value="SynGO"/>
</dbReference>
<dbReference type="GO" id="GO:0045202">
    <property type="term" value="C:synapse"/>
    <property type="evidence" value="ECO:0000314"/>
    <property type="project" value="SynGO"/>
</dbReference>
<dbReference type="FunFam" id="1.25.10.10:FF:000011">
    <property type="entry name" value="Serine/threonine-protein phosphatase 2A regulatory subunit A alpha isoform"/>
    <property type="match status" value="1"/>
</dbReference>
<dbReference type="Gene3D" id="1.25.10.10">
    <property type="entry name" value="Leucine-rich Repeat Variant"/>
    <property type="match status" value="1"/>
</dbReference>
<dbReference type="InterPro" id="IPR011989">
    <property type="entry name" value="ARM-like"/>
</dbReference>
<dbReference type="InterPro" id="IPR016024">
    <property type="entry name" value="ARM-type_fold"/>
</dbReference>
<dbReference type="InterPro" id="IPR000357">
    <property type="entry name" value="HEAT"/>
</dbReference>
<dbReference type="InterPro" id="IPR021133">
    <property type="entry name" value="HEAT_type_2"/>
</dbReference>
<dbReference type="InterPro" id="IPR054573">
    <property type="entry name" value="PP2A/SF3B1-like_HEAT"/>
</dbReference>
<dbReference type="InterPro" id="IPR051023">
    <property type="entry name" value="PP2A_Regulatory_Subunit_A"/>
</dbReference>
<dbReference type="PANTHER" id="PTHR10648">
    <property type="entry name" value="SERINE/THREONINE-PROTEIN PHOSPHATASE PP2A 65 KDA REGULATORY SUBUNIT"/>
    <property type="match status" value="1"/>
</dbReference>
<dbReference type="PANTHER" id="PTHR10648:SF9">
    <property type="entry name" value="SERINE_THREONINE-PROTEIN PHOSPHATASE 2A 65 KDA REGULATORY SUBUNIT A BETA ISOFORM"/>
    <property type="match status" value="1"/>
</dbReference>
<dbReference type="Pfam" id="PF02985">
    <property type="entry name" value="HEAT"/>
    <property type="match status" value="5"/>
</dbReference>
<dbReference type="Pfam" id="PF13646">
    <property type="entry name" value="HEAT_2"/>
    <property type="match status" value="1"/>
</dbReference>
<dbReference type="Pfam" id="PF22646">
    <property type="entry name" value="PPP2R1A-like_HEAT"/>
    <property type="match status" value="1"/>
</dbReference>
<dbReference type="SUPFAM" id="SSF48371">
    <property type="entry name" value="ARM repeat"/>
    <property type="match status" value="1"/>
</dbReference>
<dbReference type="PROSITE" id="PS50077">
    <property type="entry name" value="HEAT_REPEAT"/>
    <property type="match status" value="12"/>
</dbReference>
<name>2AAB_MOUSE</name>
<evidence type="ECO:0000250" key="1"/>
<evidence type="ECO:0000250" key="2">
    <source>
        <dbReference type="UniProtKB" id="P30154"/>
    </source>
</evidence>
<evidence type="ECO:0000305" key="3"/>
<protein>
    <recommendedName>
        <fullName>Serine/threonine-protein phosphatase 2A 65 kDa regulatory subunit A beta isoform</fullName>
    </recommendedName>
    <alternativeName>
        <fullName>PP2A subunit A isoform PR65-beta</fullName>
    </alternativeName>
    <alternativeName>
        <fullName>PP2A subunit A isoform R1-beta</fullName>
    </alternativeName>
</protein>
<reference key="1">
    <citation type="journal article" date="2009" name="PLoS Biol.">
        <title>Lineage-specific biology revealed by a finished genome assembly of the mouse.</title>
        <authorList>
            <person name="Church D.M."/>
            <person name="Goodstadt L."/>
            <person name="Hillier L.W."/>
            <person name="Zody M.C."/>
            <person name="Goldstein S."/>
            <person name="She X."/>
            <person name="Bult C.J."/>
            <person name="Agarwala R."/>
            <person name="Cherry J.L."/>
            <person name="DiCuccio M."/>
            <person name="Hlavina W."/>
            <person name="Kapustin Y."/>
            <person name="Meric P."/>
            <person name="Maglott D."/>
            <person name="Birtle Z."/>
            <person name="Marques A.C."/>
            <person name="Graves T."/>
            <person name="Zhou S."/>
            <person name="Teague B."/>
            <person name="Potamousis K."/>
            <person name="Churas C."/>
            <person name="Place M."/>
            <person name="Herschleb J."/>
            <person name="Runnheim R."/>
            <person name="Forrest D."/>
            <person name="Amos-Landgraf J."/>
            <person name="Schwartz D.C."/>
            <person name="Cheng Z."/>
            <person name="Lindblad-Toh K."/>
            <person name="Eichler E.E."/>
            <person name="Ponting C.P."/>
        </authorList>
    </citation>
    <scope>NUCLEOTIDE SEQUENCE [LARGE SCALE GENOMIC DNA]</scope>
    <source>
        <strain>C57BL/6J</strain>
    </source>
</reference>
<reference key="2">
    <citation type="journal article" date="2004" name="Genome Res.">
        <title>The status, quality, and expansion of the NIH full-length cDNA project: the Mammalian Gene Collection (MGC).</title>
        <authorList>
            <consortium name="The MGC Project Team"/>
        </authorList>
    </citation>
    <scope>NUCLEOTIDE SEQUENCE [LARGE SCALE MRNA]</scope>
    <source>
        <strain>C57BL/6J</strain>
        <tissue>Embryo</tissue>
    </source>
</reference>
<reference key="3">
    <citation type="journal article" date="2010" name="Cell">
        <title>A tissue-specific atlas of mouse protein phosphorylation and expression.</title>
        <authorList>
            <person name="Huttlin E.L."/>
            <person name="Jedrychowski M.P."/>
            <person name="Elias J.E."/>
            <person name="Goswami T."/>
            <person name="Rad R."/>
            <person name="Beausoleil S.A."/>
            <person name="Villen J."/>
            <person name="Haas W."/>
            <person name="Sowa M.E."/>
            <person name="Gygi S.P."/>
        </authorList>
    </citation>
    <scope>IDENTIFICATION BY MASS SPECTROMETRY [LARGE SCALE ANALYSIS]</scope>
    <source>
        <tissue>Brown adipose tissue</tissue>
        <tissue>Liver</tissue>
        <tissue>Lung</tissue>
        <tissue>Spleen</tissue>
        <tissue>Testis</tissue>
    </source>
</reference>
<feature type="initiator methionine" description="Removed" evidence="2">
    <location>
        <position position="1"/>
    </location>
</feature>
<feature type="chain" id="PRO_0000071404" description="Serine/threonine-protein phosphatase 2A 65 kDa regulatory subunit A beta isoform">
    <location>
        <begin position="2"/>
        <end position="601"/>
    </location>
</feature>
<feature type="repeat" description="HEAT 1">
    <location>
        <begin position="20"/>
        <end position="58"/>
    </location>
</feature>
<feature type="repeat" description="HEAT 2">
    <location>
        <begin position="59"/>
        <end position="96"/>
    </location>
</feature>
<feature type="repeat" description="HEAT 3">
    <location>
        <begin position="97"/>
        <end position="135"/>
    </location>
</feature>
<feature type="repeat" description="HEAT 4">
    <location>
        <begin position="136"/>
        <end position="173"/>
    </location>
</feature>
<feature type="repeat" description="HEAT 5">
    <location>
        <begin position="174"/>
        <end position="212"/>
    </location>
</feature>
<feature type="repeat" description="HEAT 6">
    <location>
        <begin position="213"/>
        <end position="251"/>
    </location>
</feature>
<feature type="repeat" description="HEAT 7">
    <location>
        <begin position="252"/>
        <end position="290"/>
    </location>
</feature>
<feature type="repeat" description="HEAT 8">
    <location>
        <begin position="291"/>
        <end position="333"/>
    </location>
</feature>
<feature type="repeat" description="HEAT 9">
    <location>
        <begin position="334"/>
        <end position="372"/>
    </location>
</feature>
<feature type="repeat" description="HEAT 10">
    <location>
        <begin position="373"/>
        <end position="411"/>
    </location>
</feature>
<feature type="repeat" description="HEAT 11">
    <location>
        <begin position="412"/>
        <end position="450"/>
    </location>
</feature>
<feature type="repeat" description="HEAT 12">
    <location>
        <begin position="451"/>
        <end position="489"/>
    </location>
</feature>
<feature type="repeat" description="HEAT 13">
    <location>
        <begin position="490"/>
        <end position="528"/>
    </location>
</feature>
<feature type="repeat" description="HEAT 14">
    <location>
        <begin position="529"/>
        <end position="567"/>
    </location>
</feature>
<feature type="repeat" description="HEAT 15">
    <location>
        <begin position="568"/>
        <end position="601"/>
    </location>
</feature>
<feature type="modified residue" description="N-acetylalanine" evidence="2">
    <location>
        <position position="2"/>
    </location>
</feature>
<feature type="sequence conflict" description="In Ref. 2; AAH56218." evidence="3" ref="2">
    <original>T</original>
    <variation>M</variation>
    <location>
        <position position="154"/>
    </location>
</feature>
<feature type="sequence conflict" description="In Ref. 2; AAH56218." evidence="3" ref="2">
    <original>V</original>
    <variation>E</variation>
    <location>
        <position position="193"/>
    </location>
</feature>
<feature type="sequence conflict" description="In Ref. 2; AAH56218." evidence="3" ref="2">
    <original>M</original>
    <variation>I</variation>
    <location>
        <position position="257"/>
    </location>
</feature>
<feature type="sequence conflict" description="In Ref. 2; AAH56218." evidence="3" ref="2">
    <original>N</original>
    <variation>S</variation>
    <location>
        <position position="350"/>
    </location>
</feature>
<comment type="function">
    <text evidence="1">The PR65 subunit of protein phosphatase 2A serves as a scaffolding molecule to coordinate the assembly of the catalytic subunit and a variable regulatory B subunit.</text>
</comment>
<comment type="subunit">
    <text evidence="1">PP2A consists of a common heterodimeric core enzyme, composed of a 36 kDa catalytic subunit (subunit C) and a 65 kDa constant regulatory subunit (PR65 or subunit A), that associates with a variety of regulatory subunits. Proteins that associate with the core dimer include three families of regulatory subunits B (the R2/B/PR55/B55, R3/B''/PR72/PR130/PR59 and R5/B'/B56 families), the 48 kDa variable regulatory subunit, viral proteins, and cell signaling molecules. Interacts with IPO9 (By similarity). Interacts with SGO1 (By similarity). Interacts with RAF1 (By similarity).</text>
</comment>
<comment type="interaction">
    <interactant intactId="EBI-4396871">
        <id>Q7TNP2</id>
    </interactant>
    <interactant intactId="EBI-4396886">
        <id>Q8K1S3</id>
        <label>Unc5b</label>
    </interactant>
    <organismsDiffer>false</organismsDiffer>
    <experiments>2</experiments>
</comment>
<comment type="domain">
    <text>Each HEAT repeat appears to consist of two alpha helices joined by a hydrophilic region, the intrarepeat loop. The repeat units may be arranged laterally to form a rod-like structure.</text>
</comment>
<comment type="similarity">
    <text evidence="3">Belongs to the phosphatase 2A regulatory subunit A family.</text>
</comment>
<gene>
    <name type="primary">Ppp2r1b</name>
</gene>
<organism>
    <name type="scientific">Mus musculus</name>
    <name type="common">Mouse</name>
    <dbReference type="NCBI Taxonomy" id="10090"/>
    <lineage>
        <taxon>Eukaryota</taxon>
        <taxon>Metazoa</taxon>
        <taxon>Chordata</taxon>
        <taxon>Craniata</taxon>
        <taxon>Vertebrata</taxon>
        <taxon>Euteleostomi</taxon>
        <taxon>Mammalia</taxon>
        <taxon>Eutheria</taxon>
        <taxon>Euarchontoglires</taxon>
        <taxon>Glires</taxon>
        <taxon>Rodentia</taxon>
        <taxon>Myomorpha</taxon>
        <taxon>Muroidea</taxon>
        <taxon>Muridae</taxon>
        <taxon>Murinae</taxon>
        <taxon>Mus</taxon>
        <taxon>Mus</taxon>
    </lineage>
</organism>
<keyword id="KW-0007">Acetylation</keyword>
<keyword id="KW-1185">Reference proteome</keyword>
<keyword id="KW-0677">Repeat</keyword>